<feature type="chain" id="PRO_0000092603" description="ATP-dependent lipid A-core flippase">
    <location>
        <begin position="1"/>
        <end position="583"/>
    </location>
</feature>
<feature type="transmembrane region" description="Helical" evidence="1">
    <location>
        <begin position="27"/>
        <end position="47"/>
    </location>
</feature>
<feature type="transmembrane region" description="Helical" evidence="1">
    <location>
        <begin position="69"/>
        <end position="89"/>
    </location>
</feature>
<feature type="transmembrane region" description="Helical" evidence="1">
    <location>
        <begin position="142"/>
        <end position="162"/>
    </location>
</feature>
<feature type="transmembrane region" description="Helical" evidence="1">
    <location>
        <begin position="165"/>
        <end position="185"/>
    </location>
</feature>
<feature type="transmembrane region" description="Helical" evidence="1">
    <location>
        <begin position="249"/>
        <end position="269"/>
    </location>
</feature>
<feature type="domain" description="ABC transmembrane type-1" evidence="1">
    <location>
        <begin position="28"/>
        <end position="310"/>
    </location>
</feature>
<feature type="domain" description="ABC transporter" evidence="1">
    <location>
        <begin position="342"/>
        <end position="578"/>
    </location>
</feature>
<feature type="binding site" evidence="1">
    <location>
        <begin position="376"/>
        <end position="383"/>
    </location>
    <ligand>
        <name>ATP</name>
        <dbReference type="ChEBI" id="CHEBI:30616"/>
    </ligand>
</feature>
<protein>
    <recommendedName>
        <fullName evidence="1">ATP-dependent lipid A-core flippase</fullName>
        <ecNumber evidence="1">7.5.2.6</ecNumber>
    </recommendedName>
    <alternativeName>
        <fullName evidence="1">Lipid A export ATP-binding/permease protein MsbA</fullName>
    </alternativeName>
</protein>
<proteinExistence type="inferred from homology"/>
<sequence>MSINTDESTWRTFKRLWTFIRLYKSGLAVAVVALIINAVSDTYMVSLLKPLLDEGFGSAESDFLRTLPLLVFGLMFIRGISSFVSTYCLSWVSGNVVMQVRRMVFNHYMQMPVSYFDKEKSGSLLSRITYDSEQVSAATSQALVSIVREGTSIIGLLVLMFYNSWQLSLVLILVAPVVAWAIGFVSKRFRKISKNMQTTMGIVTSSAEQMLKGHKVVLSYGGQEVEKSRFDVVSNQMRQQSMKLITAQAAANPIIQMIASIAIVVVLYLASVDTIKDQLTPGTFTVVFSAMFGLMRPLKALTNVTSQFQRGMAAAQTLFALVDLEPEKNTGTYSVERAKGEVNVKDISFTYEGAEKPALSHVSFDIPRGKTVALVGRSGSGKSTIANLFTRFYDVDSGEIQLDGVDVRDYELKNLRTQFALVSQNVHLFNDTIANNIAYAAGDKYSREDIERAAELAHAMEFISKMENGLDTMVGENGASLSGGQRQRVAIARALLRDAPVLILDEATSALDTESERAIQSALDELQKNKTVLVIAHRLSTIEKADQILVIDDGSVVERGSHSELIEKDGAYAQLHRIQFGEG</sequence>
<keyword id="KW-0067">ATP-binding</keyword>
<keyword id="KW-0997">Cell inner membrane</keyword>
<keyword id="KW-1003">Cell membrane</keyword>
<keyword id="KW-0445">Lipid transport</keyword>
<keyword id="KW-0472">Membrane</keyword>
<keyword id="KW-0547">Nucleotide-binding</keyword>
<keyword id="KW-1278">Translocase</keyword>
<keyword id="KW-0812">Transmembrane</keyword>
<keyword id="KW-1133">Transmembrane helix</keyword>
<keyword id="KW-0813">Transport</keyword>
<accession>Q8DAV2</accession>
<name>MSBA_VIBVU</name>
<gene>
    <name evidence="1" type="primary">msbA</name>
    <name type="ordered locus">VV1_2085</name>
</gene>
<dbReference type="EC" id="7.5.2.6" evidence="1"/>
<dbReference type="EMBL" id="AE016795">
    <property type="protein sequence ID" value="AAO10473.1"/>
    <property type="molecule type" value="Genomic_DNA"/>
</dbReference>
<dbReference type="RefSeq" id="WP_011079971.1">
    <property type="nucleotide sequence ID" value="NC_004459.3"/>
</dbReference>
<dbReference type="SMR" id="Q8DAV2"/>
<dbReference type="KEGG" id="vvu:VV1_2085"/>
<dbReference type="HOGENOM" id="CLU_000604_84_3_6"/>
<dbReference type="Proteomes" id="UP000002275">
    <property type="component" value="Chromosome 1"/>
</dbReference>
<dbReference type="GO" id="GO:0005886">
    <property type="term" value="C:plasma membrane"/>
    <property type="evidence" value="ECO:0007669"/>
    <property type="project" value="UniProtKB-SubCell"/>
</dbReference>
<dbReference type="GO" id="GO:0015421">
    <property type="term" value="F:ABC-type oligopeptide transporter activity"/>
    <property type="evidence" value="ECO:0007669"/>
    <property type="project" value="TreeGrafter"/>
</dbReference>
<dbReference type="GO" id="GO:0005524">
    <property type="term" value="F:ATP binding"/>
    <property type="evidence" value="ECO:0007669"/>
    <property type="project" value="UniProtKB-KW"/>
</dbReference>
<dbReference type="GO" id="GO:0016887">
    <property type="term" value="F:ATP hydrolysis activity"/>
    <property type="evidence" value="ECO:0007669"/>
    <property type="project" value="InterPro"/>
</dbReference>
<dbReference type="GO" id="GO:0034040">
    <property type="term" value="F:ATPase-coupled lipid transmembrane transporter activity"/>
    <property type="evidence" value="ECO:0007669"/>
    <property type="project" value="InterPro"/>
</dbReference>
<dbReference type="CDD" id="cd18552">
    <property type="entry name" value="ABC_6TM_MsbA_like"/>
    <property type="match status" value="1"/>
</dbReference>
<dbReference type="CDD" id="cd03251">
    <property type="entry name" value="ABCC_MsbA"/>
    <property type="match status" value="1"/>
</dbReference>
<dbReference type="FunFam" id="3.40.50.300:FF:000140">
    <property type="entry name" value="Lipid A export ATP-binding/permease protein MsbA"/>
    <property type="match status" value="1"/>
</dbReference>
<dbReference type="Gene3D" id="1.20.1560.10">
    <property type="entry name" value="ABC transporter type 1, transmembrane domain"/>
    <property type="match status" value="1"/>
</dbReference>
<dbReference type="Gene3D" id="3.40.50.300">
    <property type="entry name" value="P-loop containing nucleotide triphosphate hydrolases"/>
    <property type="match status" value="1"/>
</dbReference>
<dbReference type="InterPro" id="IPR003593">
    <property type="entry name" value="AAA+_ATPase"/>
</dbReference>
<dbReference type="InterPro" id="IPR011527">
    <property type="entry name" value="ABC1_TM_dom"/>
</dbReference>
<dbReference type="InterPro" id="IPR036640">
    <property type="entry name" value="ABC1_TM_sf"/>
</dbReference>
<dbReference type="InterPro" id="IPR003439">
    <property type="entry name" value="ABC_transporter-like_ATP-bd"/>
</dbReference>
<dbReference type="InterPro" id="IPR017871">
    <property type="entry name" value="ABC_transporter-like_CS"/>
</dbReference>
<dbReference type="InterPro" id="IPR011917">
    <property type="entry name" value="ABC_transpr_lipidA"/>
</dbReference>
<dbReference type="InterPro" id="IPR027417">
    <property type="entry name" value="P-loop_NTPase"/>
</dbReference>
<dbReference type="InterPro" id="IPR039421">
    <property type="entry name" value="Type_1_exporter"/>
</dbReference>
<dbReference type="NCBIfam" id="TIGR02203">
    <property type="entry name" value="MsbA_lipidA"/>
    <property type="match status" value="1"/>
</dbReference>
<dbReference type="NCBIfam" id="NF008381">
    <property type="entry name" value="PRK11176.1"/>
    <property type="match status" value="1"/>
</dbReference>
<dbReference type="PANTHER" id="PTHR43394:SF1">
    <property type="entry name" value="ATP-BINDING CASSETTE SUB-FAMILY B MEMBER 10, MITOCHONDRIAL"/>
    <property type="match status" value="1"/>
</dbReference>
<dbReference type="PANTHER" id="PTHR43394">
    <property type="entry name" value="ATP-DEPENDENT PERMEASE MDL1, MITOCHONDRIAL"/>
    <property type="match status" value="1"/>
</dbReference>
<dbReference type="Pfam" id="PF00664">
    <property type="entry name" value="ABC_membrane"/>
    <property type="match status" value="1"/>
</dbReference>
<dbReference type="Pfam" id="PF00005">
    <property type="entry name" value="ABC_tran"/>
    <property type="match status" value="1"/>
</dbReference>
<dbReference type="SMART" id="SM00382">
    <property type="entry name" value="AAA"/>
    <property type="match status" value="1"/>
</dbReference>
<dbReference type="SUPFAM" id="SSF90123">
    <property type="entry name" value="ABC transporter transmembrane region"/>
    <property type="match status" value="1"/>
</dbReference>
<dbReference type="SUPFAM" id="SSF52540">
    <property type="entry name" value="P-loop containing nucleoside triphosphate hydrolases"/>
    <property type="match status" value="1"/>
</dbReference>
<dbReference type="PROSITE" id="PS50929">
    <property type="entry name" value="ABC_TM1F"/>
    <property type="match status" value="1"/>
</dbReference>
<dbReference type="PROSITE" id="PS00211">
    <property type="entry name" value="ABC_TRANSPORTER_1"/>
    <property type="match status" value="1"/>
</dbReference>
<dbReference type="PROSITE" id="PS50893">
    <property type="entry name" value="ABC_TRANSPORTER_2"/>
    <property type="match status" value="1"/>
</dbReference>
<dbReference type="PROSITE" id="PS51239">
    <property type="entry name" value="MSBA"/>
    <property type="match status" value="1"/>
</dbReference>
<reference key="1">
    <citation type="submission" date="2002-12" db="EMBL/GenBank/DDBJ databases">
        <title>Complete genome sequence of Vibrio vulnificus CMCP6.</title>
        <authorList>
            <person name="Rhee J.H."/>
            <person name="Kim S.Y."/>
            <person name="Chung S.S."/>
            <person name="Kim J.J."/>
            <person name="Moon Y.H."/>
            <person name="Jeong H."/>
            <person name="Choy H.E."/>
        </authorList>
    </citation>
    <scope>NUCLEOTIDE SEQUENCE [LARGE SCALE GENOMIC DNA]</scope>
    <source>
        <strain>CMCP6</strain>
    </source>
</reference>
<organism>
    <name type="scientific">Vibrio vulnificus (strain CMCP6)</name>
    <dbReference type="NCBI Taxonomy" id="216895"/>
    <lineage>
        <taxon>Bacteria</taxon>
        <taxon>Pseudomonadati</taxon>
        <taxon>Pseudomonadota</taxon>
        <taxon>Gammaproteobacteria</taxon>
        <taxon>Vibrionales</taxon>
        <taxon>Vibrionaceae</taxon>
        <taxon>Vibrio</taxon>
    </lineage>
</organism>
<evidence type="ECO:0000255" key="1">
    <source>
        <dbReference type="HAMAP-Rule" id="MF_01703"/>
    </source>
</evidence>
<comment type="function">
    <text evidence="1">Involved in lipopolysaccharide (LPS) biosynthesis. Translocates lipid A-core from the inner to the outer leaflet of the inner membrane. Transmembrane domains (TMD) form a pore in the inner membrane and the ATP-binding domain (NBD) is responsible for energy generation.</text>
</comment>
<comment type="catalytic activity">
    <reaction evidence="1">
        <text>ATP + H2O + lipid A-core oligosaccharideSide 1 = ADP + phosphate + lipid A-core oligosaccharideSide 2.</text>
        <dbReference type="EC" id="7.5.2.6"/>
    </reaction>
</comment>
<comment type="subunit">
    <text evidence="1">Homodimer.</text>
</comment>
<comment type="subcellular location">
    <subcellularLocation>
        <location evidence="1">Cell inner membrane</location>
        <topology evidence="1">Multi-pass membrane protein</topology>
    </subcellularLocation>
</comment>
<comment type="domain">
    <text evidence="1">In MsbA the ATP-binding domain (NBD) and the transmembrane domain (TMD) are fused.</text>
</comment>
<comment type="similarity">
    <text evidence="1">Belongs to the ABC transporter superfamily. Lipid exporter (TC 3.A.1.106) family.</text>
</comment>